<sequence>MMFNKQIFTILILSLSLALAGSGCISEGAEDNVAQEITVDEFSNIRENPVTPWNPEPSAPVIDPTAYIDPQASVIGEVTIGANVMVSPMASIRSDEGMPIFVGDRSNVQDGVVLHALETINEEGEPIEDNIVEVDGKEYAVYIGNNVSLAHQSQVHGPAAVGDDTFIGMQAFVFKSKVGNNCVLEPRSAAIGVTIPDGRYIPAGMVVTSQAEADKLPEVTDDYAYSHTNEAVVYVNVHLAEGYKETS</sequence>
<feature type="signal peptide" evidence="2">
    <location>
        <begin position="1"/>
        <end position="34"/>
    </location>
</feature>
<feature type="chain" id="PRO_0000004273" description="Carbonic anhydrase">
    <location>
        <begin position="35"/>
        <end position="247"/>
    </location>
</feature>
<feature type="active site" description="Proton donor/acceptor" evidence="7">
    <location>
        <position position="96"/>
    </location>
</feature>
<feature type="active site" evidence="7">
    <location>
        <position position="118"/>
    </location>
</feature>
<feature type="binding site" evidence="1">
    <location>
        <begin position="93"/>
        <end position="95"/>
    </location>
    <ligand>
        <name>substrate</name>
    </ligand>
</feature>
<feature type="binding site" evidence="1">
    <location>
        <begin position="109"/>
        <end position="110"/>
    </location>
    <ligand>
        <name>substrate</name>
    </ligand>
</feature>
<feature type="binding site" evidence="1 3 13 14 15 16">
    <location>
        <position position="115"/>
    </location>
    <ligand>
        <name>Zn(2+)</name>
        <dbReference type="ChEBI" id="CHEBI:29105"/>
    </ligand>
</feature>
<feature type="binding site" evidence="1 3 13 14 15 16">
    <location>
        <position position="151"/>
    </location>
    <ligand>
        <name>Zn(2+)</name>
        <dbReference type="ChEBI" id="CHEBI:29105"/>
    </ligand>
</feature>
<feature type="binding site" evidence="1 3 13 14 15 16">
    <location>
        <position position="156"/>
    </location>
    <ligand>
        <name>Zn(2+)</name>
        <dbReference type="ChEBI" id="CHEBI:29105"/>
    </ligand>
</feature>
<feature type="binding site" evidence="1">
    <location>
        <position position="236"/>
    </location>
    <ligand>
        <name>substrate</name>
    </ligand>
</feature>
<feature type="strand" evidence="17">
    <location>
        <begin position="44"/>
        <end position="46"/>
    </location>
</feature>
<feature type="strand" evidence="17">
    <location>
        <begin position="54"/>
        <end position="56"/>
    </location>
</feature>
<feature type="strand" evidence="17">
    <location>
        <begin position="73"/>
        <end position="80"/>
    </location>
</feature>
<feature type="strand" evidence="17">
    <location>
        <begin position="91"/>
        <end position="97"/>
    </location>
</feature>
<feature type="strand" evidence="17">
    <location>
        <begin position="100"/>
        <end position="102"/>
    </location>
</feature>
<feature type="strand" evidence="17">
    <location>
        <begin position="113"/>
        <end position="116"/>
    </location>
</feature>
<feature type="strand" evidence="18">
    <location>
        <begin position="119"/>
        <end position="121"/>
    </location>
</feature>
<feature type="turn" evidence="18">
    <location>
        <begin position="122"/>
        <end position="124"/>
    </location>
</feature>
<feature type="helix" evidence="17">
    <location>
        <begin position="128"/>
        <end position="130"/>
    </location>
</feature>
<feature type="strand" evidence="17">
    <location>
        <begin position="132"/>
        <end position="134"/>
    </location>
</feature>
<feature type="strand" evidence="17">
    <location>
        <begin position="137"/>
        <end position="143"/>
    </location>
</feature>
<feature type="strand" evidence="17">
    <location>
        <begin position="154"/>
        <end position="161"/>
    </location>
</feature>
<feature type="strand" evidence="17">
    <location>
        <begin position="172"/>
        <end position="178"/>
    </location>
</feature>
<feature type="strand" evidence="17">
    <location>
        <begin position="189"/>
        <end position="192"/>
    </location>
</feature>
<feature type="strand" evidence="17">
    <location>
        <begin position="199"/>
        <end position="201"/>
    </location>
</feature>
<feature type="helix" evidence="17">
    <location>
        <begin position="210"/>
        <end position="214"/>
    </location>
</feature>
<feature type="turn" evidence="17">
    <location>
        <begin position="224"/>
        <end position="227"/>
    </location>
</feature>
<feature type="helix" evidence="17">
    <location>
        <begin position="228"/>
        <end position="244"/>
    </location>
</feature>
<comment type="function">
    <text evidence="2 7 8 9">Reversible hydration of carbon dioxide. Important for growth on acetate (PubMed:8041719). As a probably extracellular enzyme, it may support a H(+)/CH(3)COO(-) symport mechanism and/or conversion of CO(2) to HCO(3)(-), removing excess CO(2) produced by growth on acetate (Probable).</text>
</comment>
<comment type="catalytic activity">
    <reaction evidence="2">
        <text>hydrogencarbonate + H(+) = CO2 + H2O</text>
        <dbReference type="Rhea" id="RHEA:10748"/>
        <dbReference type="ChEBI" id="CHEBI:15377"/>
        <dbReference type="ChEBI" id="CHEBI:15378"/>
        <dbReference type="ChEBI" id="CHEBI:16526"/>
        <dbReference type="ChEBI" id="CHEBI:17544"/>
        <dbReference type="EC" id="4.2.1.1"/>
    </reaction>
</comment>
<comment type="cofactor">
    <cofactor evidence="1 3">
        <name>Zn(2+)</name>
        <dbReference type="ChEBI" id="CHEBI:29105"/>
    </cofactor>
    <text evidence="1 3">Binds 1 Zn(2+) per subunit, at the subunit interface.</text>
</comment>
<comment type="subunit">
    <text evidence="1 3">Homotrimer.</text>
</comment>
<comment type="subcellular location">
    <subcellularLocation>
        <location evidence="8">Secreted</location>
    </subcellularLocation>
    <text evidence="2">When isolated from M.thermophila.</text>
</comment>
<comment type="similarity">
    <text evidence="7">Belongs to the gamma-class carbonic anhydrase family.</text>
</comment>
<comment type="sequence caution" evidence="6">
    <conflict type="erroneous initiation">
        <sequence resource="EMBL-CDS" id="AKB12346"/>
    </conflict>
    <text>Extended N-terminus.</text>
</comment>
<name>CAH_METTT</name>
<protein>
    <recommendedName>
        <fullName evidence="4">Carbonic anhydrase</fullName>
        <shortName evidence="4">CA</shortName>
        <shortName evidence="5">Cam</shortName>
        <ecNumber evidence="2">4.2.1.1</ecNumber>
    </recommendedName>
</protein>
<organism>
    <name type="scientific">Methanosarcina thermophila (strain ATCC 43570 / DSM 1825 / OCM 12 / VKM B-1830 / TM-1)</name>
    <dbReference type="NCBI Taxonomy" id="523844"/>
    <lineage>
        <taxon>Archaea</taxon>
        <taxon>Methanobacteriati</taxon>
        <taxon>Methanobacteriota</taxon>
        <taxon>Stenosarchaea group</taxon>
        <taxon>Methanomicrobia</taxon>
        <taxon>Methanosarcinales</taxon>
        <taxon>Methanosarcinaceae</taxon>
        <taxon>Methanosarcina</taxon>
    </lineage>
</organism>
<dbReference type="EC" id="4.2.1.1" evidence="2"/>
<dbReference type="EMBL" id="U08885">
    <property type="protein sequence ID" value="AAA73428.1"/>
    <property type="molecule type" value="Genomic_DNA"/>
</dbReference>
<dbReference type="EMBL" id="CP009501">
    <property type="protein sequence ID" value="AKB12346.1"/>
    <property type="status" value="ALT_INIT"/>
    <property type="molecule type" value="Genomic_DNA"/>
</dbReference>
<dbReference type="PIR" id="A57712">
    <property type="entry name" value="A57712"/>
</dbReference>
<dbReference type="RefSeq" id="WP_052721819.1">
    <property type="nucleotide sequence ID" value="NZ_CP009501.1"/>
</dbReference>
<dbReference type="PDB" id="1QQ0">
    <property type="method" value="X-ray"/>
    <property type="resolution" value="1.76 A"/>
    <property type="chains" value="A=1-247"/>
</dbReference>
<dbReference type="PDB" id="1QRE">
    <property type="method" value="X-ray"/>
    <property type="resolution" value="1.46 A"/>
    <property type="chains" value="A=1-247"/>
</dbReference>
<dbReference type="PDB" id="1QRF">
    <property type="method" value="X-ray"/>
    <property type="resolution" value="1.55 A"/>
    <property type="chains" value="A=35-247"/>
</dbReference>
<dbReference type="PDB" id="1QRG">
    <property type="method" value="X-ray"/>
    <property type="resolution" value="1.72 A"/>
    <property type="chains" value="A=35-247"/>
</dbReference>
<dbReference type="PDB" id="1QRL">
    <property type="method" value="X-ray"/>
    <property type="resolution" value="1.85 A"/>
    <property type="chains" value="A=35-247"/>
</dbReference>
<dbReference type="PDB" id="1QRM">
    <property type="method" value="X-ray"/>
    <property type="resolution" value="1.95 A"/>
    <property type="chains" value="A=35-247"/>
</dbReference>
<dbReference type="PDB" id="1THJ">
    <property type="method" value="X-ray"/>
    <property type="resolution" value="2.80 A"/>
    <property type="chains" value="A/B/C=35-247"/>
</dbReference>
<dbReference type="PDB" id="3OTM">
    <property type="method" value="X-ray"/>
    <property type="resolution" value="1.50 A"/>
    <property type="chains" value="A=36-247"/>
</dbReference>
<dbReference type="PDB" id="3OTZ">
    <property type="method" value="X-ray"/>
    <property type="resolution" value="1.60 A"/>
    <property type="chains" value="A=35-247"/>
</dbReference>
<dbReference type="PDB" id="3OU9">
    <property type="method" value="X-ray"/>
    <property type="resolution" value="1.80 A"/>
    <property type="chains" value="A=35-247"/>
</dbReference>
<dbReference type="PDB" id="3OUP">
    <property type="method" value="X-ray"/>
    <property type="resolution" value="1.65 A"/>
    <property type="chains" value="A=35-247"/>
</dbReference>
<dbReference type="PDB" id="3OW5">
    <property type="method" value="X-ray"/>
    <property type="resolution" value="1.80 A"/>
    <property type="chains" value="A=35-247"/>
</dbReference>
<dbReference type="PDBsum" id="1QQ0"/>
<dbReference type="PDBsum" id="1QRE"/>
<dbReference type="PDBsum" id="1QRF"/>
<dbReference type="PDBsum" id="1QRG"/>
<dbReference type="PDBsum" id="1QRL"/>
<dbReference type="PDBsum" id="1QRM"/>
<dbReference type="PDBsum" id="1THJ"/>
<dbReference type="PDBsum" id="3OTM"/>
<dbReference type="PDBsum" id="3OTZ"/>
<dbReference type="PDBsum" id="3OU9"/>
<dbReference type="PDBsum" id="3OUP"/>
<dbReference type="PDBsum" id="3OW5"/>
<dbReference type="SMR" id="P40881"/>
<dbReference type="STRING" id="523844.MSTHT_0588"/>
<dbReference type="BindingDB" id="P40881"/>
<dbReference type="ChEMBL" id="CHEMBL3932"/>
<dbReference type="DrugCentral" id="P40881"/>
<dbReference type="GeneID" id="41601394"/>
<dbReference type="KEGG" id="mthr:MSTHT_0588"/>
<dbReference type="PATRIC" id="fig|523844.20.peg.754"/>
<dbReference type="HOGENOM" id="CLU_064827_3_0_2"/>
<dbReference type="OrthoDB" id="10940at2157"/>
<dbReference type="BRENDA" id="4.2.1.1">
    <property type="organism ID" value="3281"/>
</dbReference>
<dbReference type="EvolutionaryTrace" id="P40881"/>
<dbReference type="Proteomes" id="UP000066529">
    <property type="component" value="Chromosome"/>
</dbReference>
<dbReference type="GO" id="GO:0005576">
    <property type="term" value="C:extracellular region"/>
    <property type="evidence" value="ECO:0007669"/>
    <property type="project" value="UniProtKB-SubCell"/>
</dbReference>
<dbReference type="GO" id="GO:0071890">
    <property type="term" value="F:bicarbonate binding"/>
    <property type="evidence" value="ECO:0000314"/>
    <property type="project" value="CAFA"/>
</dbReference>
<dbReference type="GO" id="GO:0004089">
    <property type="term" value="F:carbonate dehydratase activity"/>
    <property type="evidence" value="ECO:0000314"/>
    <property type="project" value="CACAO"/>
</dbReference>
<dbReference type="GO" id="GO:0050897">
    <property type="term" value="F:cobalt ion binding"/>
    <property type="evidence" value="ECO:0000314"/>
    <property type="project" value="CAFA"/>
</dbReference>
<dbReference type="GO" id="GO:0043199">
    <property type="term" value="F:sulfate binding"/>
    <property type="evidence" value="ECO:0000314"/>
    <property type="project" value="CAFA"/>
</dbReference>
<dbReference type="GO" id="GO:0008270">
    <property type="term" value="F:zinc ion binding"/>
    <property type="evidence" value="ECO:0000314"/>
    <property type="project" value="CAFA"/>
</dbReference>
<dbReference type="CDD" id="cd00710">
    <property type="entry name" value="LbH_gamma_CA"/>
    <property type="match status" value="1"/>
</dbReference>
<dbReference type="DisProt" id="DP00110"/>
<dbReference type="Gene3D" id="2.160.10.10">
    <property type="entry name" value="Hexapeptide repeat proteins"/>
    <property type="match status" value="1"/>
</dbReference>
<dbReference type="InterPro" id="IPR047223">
    <property type="entry name" value="CA_gamma_LbH"/>
</dbReference>
<dbReference type="InterPro" id="IPR054954">
    <property type="entry name" value="carb_anhyd"/>
</dbReference>
<dbReference type="InterPro" id="IPR052265">
    <property type="entry name" value="Gamma-CA"/>
</dbReference>
<dbReference type="InterPro" id="IPR011004">
    <property type="entry name" value="Trimer_LpxA-like_sf"/>
</dbReference>
<dbReference type="NCBIfam" id="NF040597">
    <property type="entry name" value="carb_anhyd"/>
    <property type="match status" value="1"/>
</dbReference>
<dbReference type="PANTHER" id="PTHR43360">
    <property type="entry name" value="CARBON DIOXIDE CONCENTRATING MECHANISM PROTEIN CCMM"/>
    <property type="match status" value="1"/>
</dbReference>
<dbReference type="PANTHER" id="PTHR43360:SF1">
    <property type="entry name" value="CARBOXYSOME ASSEMBLY PROTEIN CCMM"/>
    <property type="match status" value="1"/>
</dbReference>
<dbReference type="SUPFAM" id="SSF51161">
    <property type="entry name" value="Trimeric LpxA-like enzymes"/>
    <property type="match status" value="1"/>
</dbReference>
<evidence type="ECO:0000269" key="1">
    <source>
    </source>
</evidence>
<evidence type="ECO:0000269" key="2">
    <source>
    </source>
</evidence>
<evidence type="ECO:0000269" key="3">
    <source>
    </source>
</evidence>
<evidence type="ECO:0000303" key="4">
    <source>
    </source>
</evidence>
<evidence type="ECO:0000303" key="5">
    <source>
    </source>
</evidence>
<evidence type="ECO:0000305" key="6"/>
<evidence type="ECO:0000305" key="7">
    <source>
    </source>
</evidence>
<evidence type="ECO:0000305" key="8">
    <source>
    </source>
</evidence>
<evidence type="ECO:0000305" key="9">
    <source>
    </source>
</evidence>
<evidence type="ECO:0007744" key="10">
    <source>
        <dbReference type="PDB" id="1QQ0"/>
    </source>
</evidence>
<evidence type="ECO:0007744" key="11">
    <source>
        <dbReference type="PDB" id="1QRE"/>
    </source>
</evidence>
<evidence type="ECO:0007744" key="12">
    <source>
        <dbReference type="PDB" id="1QRF"/>
    </source>
</evidence>
<evidence type="ECO:0007744" key="13">
    <source>
        <dbReference type="PDB" id="1QRG"/>
    </source>
</evidence>
<evidence type="ECO:0007744" key="14">
    <source>
        <dbReference type="PDB" id="1QRL"/>
    </source>
</evidence>
<evidence type="ECO:0007744" key="15">
    <source>
        <dbReference type="PDB" id="1QRM"/>
    </source>
</evidence>
<evidence type="ECO:0007744" key="16">
    <source>
        <dbReference type="PDB" id="1THJ"/>
    </source>
</evidence>
<evidence type="ECO:0007829" key="17">
    <source>
        <dbReference type="PDB" id="1QRE"/>
    </source>
</evidence>
<evidence type="ECO:0007829" key="18">
    <source>
        <dbReference type="PDB" id="1QRG"/>
    </source>
</evidence>
<reference key="1">
    <citation type="journal article" date="1994" name="Proc. Natl. Acad. Sci. U.S.A.">
        <title>A carbonic anhydrase from the archaeon Methanosarcina thermophila.</title>
        <authorList>
            <person name="Alber B.E."/>
            <person name="Ferry J.G."/>
        </authorList>
    </citation>
    <scope>NUCLEOTIDE SEQUENCE [GENOMIC DNA]</scope>
    <scope>PROTEIN SEQUENCE OF 35-60</scope>
    <scope>FUNCTION</scope>
    <scope>CATALYTIC ACTIVITY</scope>
    <scope>SUBCELLULAR LOCATION</scope>
    <source>
        <strain>ATCC 43570 / DSM 1825 / OCM 12 / VKM B-1830 / TM-1</strain>
    </source>
</reference>
<reference key="2">
    <citation type="submission" date="2014-07" db="EMBL/GenBank/DDBJ databases">
        <title>Methanogenic archaea and the global carbon cycle.</title>
        <authorList>
            <person name="Henriksen J.R."/>
            <person name="Luke J."/>
            <person name="Reinhart S."/>
            <person name="Benedict M.N."/>
            <person name="Youngblut N.D."/>
            <person name="Metcalf M.E."/>
            <person name="Whitaker R.J."/>
            <person name="Metcalf W.W."/>
        </authorList>
    </citation>
    <scope>NUCLEOTIDE SEQUENCE [LARGE SCALE GENOMIC DNA]</scope>
    <source>
        <strain>ATCC 43570 / DSM 1825 / OCM 12 / VKM B-1830 / TM-1</strain>
    </source>
</reference>
<reference evidence="16" key="3">
    <citation type="journal article" date="1996" name="EMBO J.">
        <title>A left-hand beta-helix revealed by the crystal structure of a carbonic anhydrase from the archaeon Methanosarcina thermophila.</title>
        <authorList>
            <person name="Kisker C."/>
            <person name="Schindelin H."/>
            <person name="Alber B.E."/>
            <person name="Ferry J.G."/>
            <person name="Rees D.C."/>
        </authorList>
    </citation>
    <scope>X-RAY CRYSTALLOGRAPHY (2.8 ANGSTROMS) OF 35-247 IN COMPLEX WITH ZINC ION</scope>
    <scope>POSSIBLE FUNCTION</scope>
    <scope>COFACTOR</scope>
    <scope>SUBUNIT</scope>
</reference>
<reference evidence="10 11 12 13 14 15" key="4">
    <citation type="journal article" date="2000" name="Biochemistry">
        <title>A closer look at the active site of gamma-class carbonic anhydrases: high-resolution crystallographic studies of the carbonic anhydrase from Methanosarcina thermophila.</title>
        <authorList>
            <person name="Iverson T.M."/>
            <person name="Alber B.E."/>
            <person name="Kisker C."/>
            <person name="Ferry J.G."/>
            <person name="Rees D.C."/>
        </authorList>
    </citation>
    <scope>X-RAY CRYSTALLOGRAPHY (1.46 ANGSTROMS) IN COMPLEX WITH ZINC ION AND SUBSTRATE</scope>
    <scope>POSSIBLE FUNCTION</scope>
    <scope>COFACTOR</scope>
    <scope>SUBUNIT</scope>
    <scope>ACTIVE SITE</scope>
</reference>
<keyword id="KW-0002">3D-structure</keyword>
<keyword id="KW-0903">Direct protein sequencing</keyword>
<keyword id="KW-0456">Lyase</keyword>
<keyword id="KW-0479">Metal-binding</keyword>
<keyword id="KW-0964">Secreted</keyword>
<keyword id="KW-0732">Signal</keyword>
<keyword id="KW-0862">Zinc</keyword>
<accession>P40881</accession>
<accession>A0A0E3NC87</accession>
<gene>
    <name type="ORF">MSTHT_0588</name>
</gene>
<proteinExistence type="evidence at protein level"/>